<protein>
    <recommendedName>
        <fullName evidence="1">Ribosomal RNA small subunit methyltransferase H</fullName>
        <ecNumber evidence="1">2.1.1.199</ecNumber>
    </recommendedName>
    <alternativeName>
        <fullName evidence="1">16S rRNA m(4)C1402 methyltransferase</fullName>
    </alternativeName>
    <alternativeName>
        <fullName evidence="1">rRNA (cytosine-N(4)-)-methyltransferase RsmH</fullName>
    </alternativeName>
</protein>
<name>RSMH_ACIBS</name>
<accession>B0VPF9</accession>
<dbReference type="EC" id="2.1.1.199" evidence="1"/>
<dbReference type="EMBL" id="CU468230">
    <property type="protein sequence ID" value="CAO99677.1"/>
    <property type="molecule type" value="Genomic_DNA"/>
</dbReference>
<dbReference type="SMR" id="B0VPF9"/>
<dbReference type="KEGG" id="abm:ABSDF0282"/>
<dbReference type="HOGENOM" id="CLU_038422_2_0_6"/>
<dbReference type="Proteomes" id="UP000001741">
    <property type="component" value="Chromosome"/>
</dbReference>
<dbReference type="GO" id="GO:0005737">
    <property type="term" value="C:cytoplasm"/>
    <property type="evidence" value="ECO:0007669"/>
    <property type="project" value="UniProtKB-SubCell"/>
</dbReference>
<dbReference type="GO" id="GO:0071424">
    <property type="term" value="F:rRNA (cytosine-N4-)-methyltransferase activity"/>
    <property type="evidence" value="ECO:0007669"/>
    <property type="project" value="UniProtKB-UniRule"/>
</dbReference>
<dbReference type="GO" id="GO:0070475">
    <property type="term" value="P:rRNA base methylation"/>
    <property type="evidence" value="ECO:0007669"/>
    <property type="project" value="UniProtKB-UniRule"/>
</dbReference>
<dbReference type="CDD" id="cd02440">
    <property type="entry name" value="AdoMet_MTases"/>
    <property type="match status" value="1"/>
</dbReference>
<dbReference type="FunFam" id="1.10.150.170:FF:000001">
    <property type="entry name" value="Ribosomal RNA small subunit methyltransferase H"/>
    <property type="match status" value="1"/>
</dbReference>
<dbReference type="Gene3D" id="1.10.150.170">
    <property type="entry name" value="Putative methyltransferase TM0872, insert domain"/>
    <property type="match status" value="1"/>
</dbReference>
<dbReference type="Gene3D" id="3.40.50.150">
    <property type="entry name" value="Vaccinia Virus protein VP39"/>
    <property type="match status" value="1"/>
</dbReference>
<dbReference type="HAMAP" id="MF_01007">
    <property type="entry name" value="16SrRNA_methyltr_H"/>
    <property type="match status" value="1"/>
</dbReference>
<dbReference type="InterPro" id="IPR002903">
    <property type="entry name" value="RsmH"/>
</dbReference>
<dbReference type="InterPro" id="IPR023397">
    <property type="entry name" value="SAM-dep_MeTrfase_MraW_recog"/>
</dbReference>
<dbReference type="InterPro" id="IPR029063">
    <property type="entry name" value="SAM-dependent_MTases_sf"/>
</dbReference>
<dbReference type="NCBIfam" id="TIGR00006">
    <property type="entry name" value="16S rRNA (cytosine(1402)-N(4))-methyltransferase RsmH"/>
    <property type="match status" value="1"/>
</dbReference>
<dbReference type="PANTHER" id="PTHR11265:SF0">
    <property type="entry name" value="12S RRNA N4-METHYLCYTIDINE METHYLTRANSFERASE"/>
    <property type="match status" value="1"/>
</dbReference>
<dbReference type="PANTHER" id="PTHR11265">
    <property type="entry name" value="S-ADENOSYL-METHYLTRANSFERASE MRAW"/>
    <property type="match status" value="1"/>
</dbReference>
<dbReference type="Pfam" id="PF01795">
    <property type="entry name" value="Methyltransf_5"/>
    <property type="match status" value="1"/>
</dbReference>
<dbReference type="PIRSF" id="PIRSF004486">
    <property type="entry name" value="MraW"/>
    <property type="match status" value="1"/>
</dbReference>
<dbReference type="SUPFAM" id="SSF81799">
    <property type="entry name" value="Putative methyltransferase TM0872, insert domain"/>
    <property type="match status" value="1"/>
</dbReference>
<dbReference type="SUPFAM" id="SSF53335">
    <property type="entry name" value="S-adenosyl-L-methionine-dependent methyltransferases"/>
    <property type="match status" value="1"/>
</dbReference>
<keyword id="KW-0963">Cytoplasm</keyword>
<keyword id="KW-0489">Methyltransferase</keyword>
<keyword id="KW-0698">rRNA processing</keyword>
<keyword id="KW-0949">S-adenosyl-L-methionine</keyword>
<keyword id="KW-0808">Transferase</keyword>
<reference key="1">
    <citation type="journal article" date="2008" name="PLoS ONE">
        <title>Comparative analysis of Acinetobacters: three genomes for three lifestyles.</title>
        <authorList>
            <person name="Vallenet D."/>
            <person name="Nordmann P."/>
            <person name="Barbe V."/>
            <person name="Poirel L."/>
            <person name="Mangenot S."/>
            <person name="Bataille E."/>
            <person name="Dossat C."/>
            <person name="Gas S."/>
            <person name="Kreimeyer A."/>
            <person name="Lenoble P."/>
            <person name="Oztas S."/>
            <person name="Poulain J."/>
            <person name="Segurens B."/>
            <person name="Robert C."/>
            <person name="Abergel C."/>
            <person name="Claverie J.-M."/>
            <person name="Raoult D."/>
            <person name="Medigue C."/>
            <person name="Weissenbach J."/>
            <person name="Cruveiller S."/>
        </authorList>
    </citation>
    <scope>NUCLEOTIDE SEQUENCE [LARGE SCALE GENOMIC DNA]</scope>
    <source>
        <strain>SDF</strain>
    </source>
</reference>
<comment type="function">
    <text evidence="1">Specifically methylates the N4 position of cytidine in position 1402 (C1402) of 16S rRNA.</text>
</comment>
<comment type="catalytic activity">
    <reaction evidence="1">
        <text>cytidine(1402) in 16S rRNA + S-adenosyl-L-methionine = N(4)-methylcytidine(1402) in 16S rRNA + S-adenosyl-L-homocysteine + H(+)</text>
        <dbReference type="Rhea" id="RHEA:42928"/>
        <dbReference type="Rhea" id="RHEA-COMP:10286"/>
        <dbReference type="Rhea" id="RHEA-COMP:10287"/>
        <dbReference type="ChEBI" id="CHEBI:15378"/>
        <dbReference type="ChEBI" id="CHEBI:57856"/>
        <dbReference type="ChEBI" id="CHEBI:59789"/>
        <dbReference type="ChEBI" id="CHEBI:74506"/>
        <dbReference type="ChEBI" id="CHEBI:82748"/>
        <dbReference type="EC" id="2.1.1.199"/>
    </reaction>
</comment>
<comment type="subcellular location">
    <subcellularLocation>
        <location evidence="1">Cytoplasm</location>
    </subcellularLocation>
</comment>
<comment type="similarity">
    <text evidence="1">Belongs to the methyltransferase superfamily. RsmH family.</text>
</comment>
<feature type="chain" id="PRO_0000386693" description="Ribosomal RNA small subunit methyltransferase H">
    <location>
        <begin position="1"/>
        <end position="307"/>
    </location>
</feature>
<feature type="binding site" evidence="1">
    <location>
        <begin position="32"/>
        <end position="34"/>
    </location>
    <ligand>
        <name>S-adenosyl-L-methionine</name>
        <dbReference type="ChEBI" id="CHEBI:59789"/>
    </ligand>
</feature>
<feature type="binding site" evidence="1">
    <location>
        <position position="52"/>
    </location>
    <ligand>
        <name>S-adenosyl-L-methionine</name>
        <dbReference type="ChEBI" id="CHEBI:59789"/>
    </ligand>
</feature>
<feature type="binding site" evidence="1">
    <location>
        <position position="78"/>
    </location>
    <ligand>
        <name>S-adenosyl-L-methionine</name>
        <dbReference type="ChEBI" id="CHEBI:59789"/>
    </ligand>
</feature>
<feature type="binding site" evidence="1">
    <location>
        <position position="99"/>
    </location>
    <ligand>
        <name>S-adenosyl-L-methionine</name>
        <dbReference type="ChEBI" id="CHEBI:59789"/>
    </ligand>
</feature>
<feature type="binding site" evidence="1">
    <location>
        <position position="106"/>
    </location>
    <ligand>
        <name>S-adenosyl-L-methionine</name>
        <dbReference type="ChEBI" id="CHEBI:59789"/>
    </ligand>
</feature>
<organism>
    <name type="scientific">Acinetobacter baumannii (strain SDF)</name>
    <dbReference type="NCBI Taxonomy" id="509170"/>
    <lineage>
        <taxon>Bacteria</taxon>
        <taxon>Pseudomonadati</taxon>
        <taxon>Pseudomonadota</taxon>
        <taxon>Gammaproteobacteria</taxon>
        <taxon>Moraxellales</taxon>
        <taxon>Moraxellaceae</taxon>
        <taxon>Acinetobacter</taxon>
        <taxon>Acinetobacter calcoaceticus/baumannii complex</taxon>
    </lineage>
</organism>
<evidence type="ECO:0000255" key="1">
    <source>
        <dbReference type="HAMAP-Rule" id="MF_01007"/>
    </source>
</evidence>
<gene>
    <name evidence="1" type="primary">rsmH</name>
    <name type="synonym">mraW</name>
    <name type="ordered locus">ABSDF0282</name>
</gene>
<sequence>MSHISVLLFETVESLLADRTTGVYIDATFGRGGHTHLLLSKLDENARVYAFDKDPQALEVAAALAQEDPRFTIIHASFADIKEKMQEIGVQSVDGIMADLGVSSPQLDQAERGFSFMQDGPLDMRMDNSKGLTAAEWLLEVEEEDLANIIYQYGEERHSRRIARAIKQAGKLDTTAQLAEIVKTAHPKWEKHKHPATRTFQAIRIAINKELDDIEVFLPQAVDLLKPKGRLSVISFHSLEDRLIKQFIQKESTLTEDSGWGMPQQQVDTRRLKKISRVRVSEEEVKANPRSRSAWLRVAERLEQKGA</sequence>
<proteinExistence type="inferred from homology"/>